<organism>
    <name type="scientific">Salmonella agona (strain SL483)</name>
    <dbReference type="NCBI Taxonomy" id="454166"/>
    <lineage>
        <taxon>Bacteria</taxon>
        <taxon>Pseudomonadati</taxon>
        <taxon>Pseudomonadota</taxon>
        <taxon>Gammaproteobacteria</taxon>
        <taxon>Enterobacterales</taxon>
        <taxon>Enterobacteriaceae</taxon>
        <taxon>Salmonella</taxon>
    </lineage>
</organism>
<comment type="function">
    <text evidence="1">NDH-1 shuttles electrons from NADH, via FMN and iron-sulfur (Fe-S) centers, to quinones in the respiratory chain. The immediate electron acceptor for the enzyme in this species is believed to be ubiquinone. Couples the redox reaction to proton translocation (for every two electrons transferred, four hydrogen ions are translocated across the cytoplasmic membrane), and thus conserves the redox energy in a proton gradient. This subunit may bind ubiquinone.</text>
</comment>
<comment type="catalytic activity">
    <reaction evidence="1">
        <text>a quinone + NADH + 5 H(+)(in) = a quinol + NAD(+) + 4 H(+)(out)</text>
        <dbReference type="Rhea" id="RHEA:57888"/>
        <dbReference type="ChEBI" id="CHEBI:15378"/>
        <dbReference type="ChEBI" id="CHEBI:24646"/>
        <dbReference type="ChEBI" id="CHEBI:57540"/>
        <dbReference type="ChEBI" id="CHEBI:57945"/>
        <dbReference type="ChEBI" id="CHEBI:132124"/>
    </reaction>
</comment>
<comment type="subunit">
    <text evidence="1">NDH-1 is composed of 13 different subunits. Subunits NuoA, H, J, K, L, M, N constitute the membrane sector of the complex.</text>
</comment>
<comment type="subcellular location">
    <subcellularLocation>
        <location evidence="1">Cell inner membrane</location>
        <topology evidence="1">Multi-pass membrane protein</topology>
    </subcellularLocation>
</comment>
<comment type="similarity">
    <text evidence="1">Belongs to the complex I subunit 1 family.</text>
</comment>
<evidence type="ECO:0000255" key="1">
    <source>
        <dbReference type="HAMAP-Rule" id="MF_01350"/>
    </source>
</evidence>
<name>NUOH_SALA4</name>
<dbReference type="EC" id="7.1.1.-" evidence="1"/>
<dbReference type="EMBL" id="CP001138">
    <property type="protein sequence ID" value="ACH52925.1"/>
    <property type="molecule type" value="Genomic_DNA"/>
</dbReference>
<dbReference type="RefSeq" id="WP_000118515.1">
    <property type="nucleotide sequence ID" value="NC_011149.1"/>
</dbReference>
<dbReference type="SMR" id="B5EZK3"/>
<dbReference type="GeneID" id="66756771"/>
<dbReference type="KEGG" id="sea:SeAg_B2461"/>
<dbReference type="HOGENOM" id="CLU_015134_0_1_6"/>
<dbReference type="Proteomes" id="UP000008819">
    <property type="component" value="Chromosome"/>
</dbReference>
<dbReference type="GO" id="GO:0005886">
    <property type="term" value="C:plasma membrane"/>
    <property type="evidence" value="ECO:0007669"/>
    <property type="project" value="UniProtKB-SubCell"/>
</dbReference>
<dbReference type="GO" id="GO:0003954">
    <property type="term" value="F:NADH dehydrogenase activity"/>
    <property type="evidence" value="ECO:0007669"/>
    <property type="project" value="TreeGrafter"/>
</dbReference>
<dbReference type="GO" id="GO:0016655">
    <property type="term" value="F:oxidoreductase activity, acting on NAD(P)H, quinone or similar compound as acceptor"/>
    <property type="evidence" value="ECO:0007669"/>
    <property type="project" value="UniProtKB-UniRule"/>
</dbReference>
<dbReference type="GO" id="GO:0048038">
    <property type="term" value="F:quinone binding"/>
    <property type="evidence" value="ECO:0007669"/>
    <property type="project" value="UniProtKB-KW"/>
</dbReference>
<dbReference type="GO" id="GO:0009060">
    <property type="term" value="P:aerobic respiration"/>
    <property type="evidence" value="ECO:0007669"/>
    <property type="project" value="TreeGrafter"/>
</dbReference>
<dbReference type="HAMAP" id="MF_01350">
    <property type="entry name" value="NDH1_NuoH"/>
    <property type="match status" value="1"/>
</dbReference>
<dbReference type="InterPro" id="IPR001694">
    <property type="entry name" value="NADH_UbQ_OxRdtase_su1/FPO"/>
</dbReference>
<dbReference type="InterPro" id="IPR018086">
    <property type="entry name" value="NADH_UbQ_OxRdtase_su1_CS"/>
</dbReference>
<dbReference type="NCBIfam" id="NF004740">
    <property type="entry name" value="PRK06076.1-1"/>
    <property type="match status" value="1"/>
</dbReference>
<dbReference type="NCBIfam" id="NF004741">
    <property type="entry name" value="PRK06076.1-2"/>
    <property type="match status" value="1"/>
</dbReference>
<dbReference type="PANTHER" id="PTHR11432">
    <property type="entry name" value="NADH DEHYDROGENASE SUBUNIT 1"/>
    <property type="match status" value="1"/>
</dbReference>
<dbReference type="PANTHER" id="PTHR11432:SF3">
    <property type="entry name" value="NADH-UBIQUINONE OXIDOREDUCTASE CHAIN 1"/>
    <property type="match status" value="1"/>
</dbReference>
<dbReference type="Pfam" id="PF00146">
    <property type="entry name" value="NADHdh"/>
    <property type="match status" value="1"/>
</dbReference>
<dbReference type="PROSITE" id="PS00667">
    <property type="entry name" value="COMPLEX1_ND1_1"/>
    <property type="match status" value="1"/>
</dbReference>
<dbReference type="PROSITE" id="PS00668">
    <property type="entry name" value="COMPLEX1_ND1_2"/>
    <property type="match status" value="1"/>
</dbReference>
<accession>B5EZK3</accession>
<keyword id="KW-0997">Cell inner membrane</keyword>
<keyword id="KW-1003">Cell membrane</keyword>
<keyword id="KW-0472">Membrane</keyword>
<keyword id="KW-0520">NAD</keyword>
<keyword id="KW-0874">Quinone</keyword>
<keyword id="KW-1278">Translocase</keyword>
<keyword id="KW-0812">Transmembrane</keyword>
<keyword id="KW-1133">Transmembrane helix</keyword>
<keyword id="KW-0830">Ubiquinone</keyword>
<protein>
    <recommendedName>
        <fullName evidence="1">NADH-quinone oxidoreductase subunit H</fullName>
        <ecNumber evidence="1">7.1.1.-</ecNumber>
    </recommendedName>
    <alternativeName>
        <fullName evidence="1">NADH dehydrogenase I subunit H</fullName>
    </alternativeName>
    <alternativeName>
        <fullName evidence="1">NDH-1 subunit H</fullName>
    </alternativeName>
</protein>
<reference key="1">
    <citation type="journal article" date="2011" name="J. Bacteriol.">
        <title>Comparative genomics of 28 Salmonella enterica isolates: evidence for CRISPR-mediated adaptive sublineage evolution.</title>
        <authorList>
            <person name="Fricke W.F."/>
            <person name="Mammel M.K."/>
            <person name="McDermott P.F."/>
            <person name="Tartera C."/>
            <person name="White D.G."/>
            <person name="Leclerc J.E."/>
            <person name="Ravel J."/>
            <person name="Cebula T.A."/>
        </authorList>
    </citation>
    <scope>NUCLEOTIDE SEQUENCE [LARGE SCALE GENOMIC DNA]</scope>
    <source>
        <strain>SL483</strain>
    </source>
</reference>
<feature type="chain" id="PRO_1000143617" description="NADH-quinone oxidoreductase subunit H">
    <location>
        <begin position="1"/>
        <end position="325"/>
    </location>
</feature>
<feature type="transmembrane region" description="Helical" evidence="1">
    <location>
        <begin position="11"/>
        <end position="31"/>
    </location>
</feature>
<feature type="transmembrane region" description="Helical" evidence="1">
    <location>
        <begin position="50"/>
        <end position="69"/>
    </location>
</feature>
<feature type="transmembrane region" description="Helical" evidence="1">
    <location>
        <begin position="81"/>
        <end position="101"/>
    </location>
</feature>
<feature type="transmembrane region" description="Helical" evidence="1">
    <location>
        <begin position="114"/>
        <end position="134"/>
    </location>
</feature>
<feature type="transmembrane region" description="Helical" evidence="1">
    <location>
        <begin position="154"/>
        <end position="174"/>
    </location>
</feature>
<feature type="transmembrane region" description="Helical" evidence="1">
    <location>
        <begin position="186"/>
        <end position="206"/>
    </location>
</feature>
<feature type="transmembrane region" description="Helical" evidence="1">
    <location>
        <begin position="237"/>
        <end position="257"/>
    </location>
</feature>
<feature type="transmembrane region" description="Helical" evidence="1">
    <location>
        <begin position="265"/>
        <end position="285"/>
    </location>
</feature>
<feature type="transmembrane region" description="Helical" evidence="1">
    <location>
        <begin position="304"/>
        <end position="324"/>
    </location>
</feature>
<gene>
    <name evidence="1" type="primary">nuoH</name>
    <name type="ordered locus">SeAg_B2461</name>
</gene>
<sequence length="325" mass="36292">MSWITPDLIEILLSILKAVVILLVVVTCGAFMSFGERRLLGLFQNRYGPNRVGWGGSLQLVADMIKMFFKEDWIPKFSDRVIFTLAPMIAFTSLLLSFAIVPVSPNWVVADLNIGILFFLMMAGLAVYAVLFAGWSSNNKYSLLGAMRASAQTVSYEVFLGLSLMGVVAQAGSFNMTDIVNNQAHLWNVIPQFFGFVTFAIAGVAVCHRHPFDQPEAEQELADGYHIEYSGMKFGLFFVGEYIGIVTVSALMVTLFFGGWHGPFLPPFVWFALKTAFFMMMFILIRASLPRPRYDQVMSFGWKVCLPLTLINLLVTAAVILWQAQ</sequence>
<proteinExistence type="inferred from homology"/>